<reference key="1">
    <citation type="journal article" date="2001" name="Nature">
        <title>Complete genome sequence of Salmonella enterica serovar Typhimurium LT2.</title>
        <authorList>
            <person name="McClelland M."/>
            <person name="Sanderson K.E."/>
            <person name="Spieth J."/>
            <person name="Clifton S.W."/>
            <person name="Latreille P."/>
            <person name="Courtney L."/>
            <person name="Porwollik S."/>
            <person name="Ali J."/>
            <person name="Dante M."/>
            <person name="Du F."/>
            <person name="Hou S."/>
            <person name="Layman D."/>
            <person name="Leonard S."/>
            <person name="Nguyen C."/>
            <person name="Scott K."/>
            <person name="Holmes A."/>
            <person name="Grewal N."/>
            <person name="Mulvaney E."/>
            <person name="Ryan E."/>
            <person name="Sun H."/>
            <person name="Florea L."/>
            <person name="Miller W."/>
            <person name="Stoneking T."/>
            <person name="Nhan M."/>
            <person name="Waterston R."/>
            <person name="Wilson R.K."/>
        </authorList>
    </citation>
    <scope>NUCLEOTIDE SEQUENCE [LARGE SCALE GENOMIC DNA]</scope>
    <source>
        <strain>LT2 / SGSC1412 / ATCC 700720</strain>
    </source>
</reference>
<reference key="2">
    <citation type="journal article" date="1989" name="Mol. Microbiol.">
        <title>Molecular characterization of the proU loci of Salmonella typhimurium and Escherichia coli encoding osmoregulated glycine betaine transport systems.</title>
        <authorList>
            <person name="Stirling D.A."/>
            <person name="Hulton C.S.J."/>
            <person name="Waddell L."/>
            <person name="Park S.F."/>
            <person name="Stewart G.S.A.B."/>
            <person name="Booth I.R."/>
            <person name="Higgins C.F."/>
        </authorList>
    </citation>
    <scope>NUCLEOTIDE SEQUENCE [GENOMIC DNA] OF 1-51</scope>
    <source>
        <strain>LT2</strain>
    </source>
</reference>
<reference key="3">
    <citation type="journal article" date="1992" name="Cell">
        <title>The chromatin-associated protein H-NS interacts with curved DNA to influence DNA topology and gene expression.</title>
        <authorList>
            <person name="Owen-Hughes T.A."/>
            <person name="Pavitt G.D."/>
            <person name="Santos D.S."/>
            <person name="Sidebotham J.M."/>
            <person name="Hulton C.S."/>
            <person name="Hinton J.C."/>
            <person name="Higgins C.F."/>
        </authorList>
    </citation>
    <scope>INDUCTION</scope>
    <source>
        <strain>LT2 / SGSC1412 / ATCC 700720</strain>
    </source>
</reference>
<dbReference type="EMBL" id="AE006468">
    <property type="protein sequence ID" value="AAL21695.1"/>
    <property type="molecule type" value="Genomic_DNA"/>
</dbReference>
<dbReference type="EMBL" id="X52693">
    <property type="protein sequence ID" value="CAA36922.1"/>
    <property type="molecule type" value="Genomic_DNA"/>
</dbReference>
<dbReference type="RefSeq" id="NP_461736.1">
    <property type="nucleotide sequence ID" value="NC_003197.2"/>
</dbReference>
<dbReference type="RefSeq" id="WP_000775022.1">
    <property type="nucleotide sequence ID" value="NC_003197.2"/>
</dbReference>
<dbReference type="SMR" id="P17327"/>
<dbReference type="STRING" id="99287.STM2810"/>
<dbReference type="PaxDb" id="99287-STM2810"/>
<dbReference type="GeneID" id="1254333"/>
<dbReference type="KEGG" id="stm:STM2810"/>
<dbReference type="PATRIC" id="fig|99287.12.peg.2968"/>
<dbReference type="HOGENOM" id="CLU_028473_1_0_6"/>
<dbReference type="OMA" id="HFNIMDP"/>
<dbReference type="PhylomeDB" id="P17327"/>
<dbReference type="BioCyc" id="SENT99287:STM2810-MONOMER"/>
<dbReference type="Proteomes" id="UP000001014">
    <property type="component" value="Chromosome"/>
</dbReference>
<dbReference type="GO" id="GO:0043190">
    <property type="term" value="C:ATP-binding cassette (ABC) transporter complex"/>
    <property type="evidence" value="ECO:0000318"/>
    <property type="project" value="GO_Central"/>
</dbReference>
<dbReference type="GO" id="GO:0005275">
    <property type="term" value="F:amine transmembrane transporter activity"/>
    <property type="evidence" value="ECO:0000318"/>
    <property type="project" value="GO_Central"/>
</dbReference>
<dbReference type="GO" id="GO:0015226">
    <property type="term" value="F:carnitine transmembrane transporter activity"/>
    <property type="evidence" value="ECO:0000318"/>
    <property type="project" value="GO_Central"/>
</dbReference>
<dbReference type="GO" id="GO:0006865">
    <property type="term" value="P:amino acid transport"/>
    <property type="evidence" value="ECO:0007669"/>
    <property type="project" value="UniProtKB-KW"/>
</dbReference>
<dbReference type="GO" id="GO:1902603">
    <property type="term" value="P:carnitine transmembrane transport"/>
    <property type="evidence" value="ECO:0000318"/>
    <property type="project" value="GO_Central"/>
</dbReference>
<dbReference type="GO" id="GO:0015871">
    <property type="term" value="P:choline transport"/>
    <property type="evidence" value="ECO:0000318"/>
    <property type="project" value="GO_Central"/>
</dbReference>
<dbReference type="GO" id="GO:0031460">
    <property type="term" value="P:glycine betaine transport"/>
    <property type="evidence" value="ECO:0000318"/>
    <property type="project" value="GO_Central"/>
</dbReference>
<dbReference type="CDD" id="cd06261">
    <property type="entry name" value="TM_PBP2"/>
    <property type="match status" value="1"/>
</dbReference>
<dbReference type="FunFam" id="1.10.3720.10:FF:000001">
    <property type="entry name" value="Glycine betaine ABC transporter, permease"/>
    <property type="match status" value="1"/>
</dbReference>
<dbReference type="Gene3D" id="1.10.3720.10">
    <property type="entry name" value="MetI-like"/>
    <property type="match status" value="1"/>
</dbReference>
<dbReference type="InterPro" id="IPR000515">
    <property type="entry name" value="MetI-like"/>
</dbReference>
<dbReference type="InterPro" id="IPR035906">
    <property type="entry name" value="MetI-like_sf"/>
</dbReference>
<dbReference type="NCBIfam" id="NF008196">
    <property type="entry name" value="PRK10952.1"/>
    <property type="match status" value="1"/>
</dbReference>
<dbReference type="PANTHER" id="PTHR47737">
    <property type="entry name" value="GLYCINE BETAINE/PROLINE BETAINE TRANSPORT SYSTEM PERMEASE PROTEIN PROW"/>
    <property type="match status" value="1"/>
</dbReference>
<dbReference type="PANTHER" id="PTHR47737:SF1">
    <property type="entry name" value="GLYCINE BETAINE_PROLINE BETAINE TRANSPORT SYSTEM PERMEASE PROTEIN PROW"/>
    <property type="match status" value="1"/>
</dbReference>
<dbReference type="Pfam" id="PF00528">
    <property type="entry name" value="BPD_transp_1"/>
    <property type="match status" value="1"/>
</dbReference>
<dbReference type="SUPFAM" id="SSF161098">
    <property type="entry name" value="MetI-like"/>
    <property type="match status" value="1"/>
</dbReference>
<dbReference type="PROSITE" id="PS50928">
    <property type="entry name" value="ABC_TM1"/>
    <property type="match status" value="1"/>
</dbReference>
<comment type="function">
    <text evidence="1">Part of the ProU ABC transporter complex involved in glycine betaine and proline betaine uptake. Probably responsible for the translocation of the substrate across the membrane.</text>
</comment>
<comment type="subunit">
    <text evidence="1">The complex is composed of two ATP-binding proteins (ProV), two transmembrane proteins (ProW) and a solute-binding protein (ProX).</text>
</comment>
<comment type="subcellular location">
    <subcellularLocation>
        <location evidence="1">Cell inner membrane</location>
        <topology evidence="2">Multi-pass membrane protein</topology>
    </subcellularLocation>
</comment>
<comment type="induction">
    <text evidence="7">Induced in response to increased extracellular osmolarity, this is the second gene of the proU operon (proV-proW-proX). Osmoregulation requires curved DNA downstream of the transcription start site in proV, which is repressed when bound by H-NS. H-NS may act indirectly to influence the local topology of the promoter (PubMed:1423593).</text>
</comment>
<comment type="similarity">
    <text evidence="6">Belongs to the binding-protein-dependent transport system permease family. CysTW subfamily.</text>
</comment>
<protein>
    <recommendedName>
        <fullName evidence="1">Glycine betaine/proline betaine transport system permease protein ProW</fullName>
    </recommendedName>
</protein>
<evidence type="ECO:0000250" key="1">
    <source>
        <dbReference type="UniProtKB" id="P14176"/>
    </source>
</evidence>
<evidence type="ECO:0000255" key="2"/>
<evidence type="ECO:0000255" key="3">
    <source>
        <dbReference type="PROSITE-ProRule" id="PRU00441"/>
    </source>
</evidence>
<evidence type="ECO:0000256" key="4">
    <source>
        <dbReference type="SAM" id="MobiDB-lite"/>
    </source>
</evidence>
<evidence type="ECO:0000303" key="5">
    <source>
    </source>
</evidence>
<evidence type="ECO:0000305" key="6"/>
<evidence type="ECO:0000305" key="7">
    <source>
    </source>
</evidence>
<accession>P17327</accession>
<proteinExistence type="evidence at transcript level"/>
<gene>
    <name evidence="5" type="primary">proW</name>
    <name type="ordered locus">STM2810</name>
</gene>
<sequence>MADQTNPWDTAQVADTTTQTADAWGTPAGVATDGGSTDWLNSAPAPAPEHFSLLDPFHKTLIPLDSWVTEGIDWVVTHFRPLFQGIRVPVDYILNGFQQLLLGMPAPVAIILFALIAWQVSGVGMGIATLISLIAIGAIGAWSQAMITLALVLTALLFCVVIGLPMGIWLARSPRAAKIVRPLLDAMQTTPAFVYLVPIVMLFGIGNVPGVVVTIIFALPPIVRLTILGINQVPADLIEASRSFGASPRQMLFKVQLPLAMPTIMAGVNQTLMLALSMVVIASMIAVGGLGQMVLRGIGRLDMGLATVGGVGIVILAIILDRLTQAVGRDSRSRGNRRWYTTGPVGLITRPFVK</sequence>
<keyword id="KW-0029">Amino-acid transport</keyword>
<keyword id="KW-0997">Cell inner membrane</keyword>
<keyword id="KW-1003">Cell membrane</keyword>
<keyword id="KW-0472">Membrane</keyword>
<keyword id="KW-1185">Reference proteome</keyword>
<keyword id="KW-0812">Transmembrane</keyword>
<keyword id="KW-1133">Transmembrane helix</keyword>
<keyword id="KW-0813">Transport</keyword>
<feature type="chain" id="PRO_0000060192" description="Glycine betaine/proline betaine transport system permease protein ProW">
    <location>
        <begin position="1"/>
        <end position="354"/>
    </location>
</feature>
<feature type="topological domain" description="Cytoplasmic" evidence="1">
    <location>
        <begin position="1"/>
        <end position="99"/>
    </location>
</feature>
<feature type="transmembrane region" description="Helical" evidence="2">
    <location>
        <begin position="100"/>
        <end position="120"/>
    </location>
</feature>
<feature type="topological domain" description="Periplasmic" evidence="1">
    <location>
        <position position="121"/>
    </location>
</feature>
<feature type="transmembrane region" description="Helical" evidence="2">
    <location>
        <begin position="122"/>
        <end position="142"/>
    </location>
</feature>
<feature type="topological domain" description="Cytoplasmic" evidence="1">
    <location>
        <begin position="143"/>
        <end position="148"/>
    </location>
</feature>
<feature type="transmembrane region" description="Helical" evidence="2">
    <location>
        <begin position="149"/>
        <end position="169"/>
    </location>
</feature>
<feature type="topological domain" description="Periplasmic" evidence="1">
    <location>
        <begin position="170"/>
        <end position="198"/>
    </location>
</feature>
<feature type="transmembrane region" description="Helical" evidence="2">
    <location>
        <begin position="199"/>
        <end position="219"/>
    </location>
</feature>
<feature type="topological domain" description="Cytoplasmic" evidence="1">
    <location>
        <begin position="220"/>
        <end position="270"/>
    </location>
</feature>
<feature type="transmembrane region" description="Helical" evidence="2">
    <location>
        <begin position="271"/>
        <end position="291"/>
    </location>
</feature>
<feature type="topological domain" description="Periplasmic" evidence="1">
    <location>
        <begin position="292"/>
        <end position="300"/>
    </location>
</feature>
<feature type="transmembrane region" description="Helical" evidence="2">
    <location>
        <begin position="301"/>
        <end position="321"/>
    </location>
</feature>
<feature type="topological domain" description="Cytoplasmic" evidence="1">
    <location>
        <begin position="322"/>
        <end position="354"/>
    </location>
</feature>
<feature type="domain" description="ABC transmembrane type-1" evidence="3">
    <location>
        <begin position="145"/>
        <end position="324"/>
    </location>
</feature>
<feature type="region of interest" description="Disordered" evidence="4">
    <location>
        <begin position="1"/>
        <end position="28"/>
    </location>
</feature>
<feature type="compositionally biased region" description="Low complexity" evidence="4">
    <location>
        <begin position="9"/>
        <end position="23"/>
    </location>
</feature>
<feature type="sequence conflict" description="In Ref. 2; CAA36922." evidence="6" ref="2">
    <original>A</original>
    <variation>R</variation>
    <location>
        <position position="31"/>
    </location>
</feature>
<name>PROW_SALTY</name>
<organism>
    <name type="scientific">Salmonella typhimurium (strain LT2 / SGSC1412 / ATCC 700720)</name>
    <dbReference type="NCBI Taxonomy" id="99287"/>
    <lineage>
        <taxon>Bacteria</taxon>
        <taxon>Pseudomonadati</taxon>
        <taxon>Pseudomonadota</taxon>
        <taxon>Gammaproteobacteria</taxon>
        <taxon>Enterobacterales</taxon>
        <taxon>Enterobacteriaceae</taxon>
        <taxon>Salmonella</taxon>
    </lineage>
</organism>